<proteinExistence type="inferred from homology"/>
<dbReference type="EMBL" id="K02170">
    <property type="protein sequence ID" value="AAA47317.1"/>
    <property type="status" value="ALT_INIT"/>
    <property type="molecule type" value="Genomic_RNA"/>
</dbReference>
<dbReference type="SMR" id="P04514"/>
<dbReference type="Proteomes" id="UP000008657">
    <property type="component" value="Genome"/>
</dbReference>
<dbReference type="GO" id="GO:0030430">
    <property type="term" value="C:host cell cytoplasm"/>
    <property type="evidence" value="ECO:0007669"/>
    <property type="project" value="UniProtKB-SubCell"/>
</dbReference>
<dbReference type="GO" id="GO:0003723">
    <property type="term" value="F:RNA binding"/>
    <property type="evidence" value="ECO:0007669"/>
    <property type="project" value="UniProtKB-UniRule"/>
</dbReference>
<dbReference type="GO" id="GO:0006417">
    <property type="term" value="P:regulation of translation"/>
    <property type="evidence" value="ECO:0007669"/>
    <property type="project" value="UniProtKB-UniRule"/>
</dbReference>
<dbReference type="CDD" id="cd20714">
    <property type="entry name" value="NSP3_rotavirus"/>
    <property type="match status" value="1"/>
</dbReference>
<dbReference type="Gene3D" id="3.30.70.1610">
    <property type="match status" value="1"/>
</dbReference>
<dbReference type="Gene3D" id="1.20.5.970">
    <property type="entry name" value="Nonstructural RNA-binding protein"/>
    <property type="match status" value="1"/>
</dbReference>
<dbReference type="Gene3D" id="6.10.280.20">
    <property type="entry name" value="Rotavirus non-structural protein NSP3, N-terminal domain"/>
    <property type="match status" value="1"/>
</dbReference>
<dbReference type="HAMAP" id="MF_04094">
    <property type="entry name" value="ROTA_A_NSP3"/>
    <property type="match status" value="1"/>
</dbReference>
<dbReference type="HAMAP" id="MF_04090">
    <property type="entry name" value="ROTA_NSP3"/>
    <property type="match status" value="1"/>
</dbReference>
<dbReference type="InterPro" id="IPR042519">
    <property type="entry name" value="NSP3_N_rotavirus"/>
</dbReference>
<dbReference type="InterPro" id="IPR036082">
    <property type="entry name" value="NSP3_sf"/>
</dbReference>
<dbReference type="InterPro" id="IPR002873">
    <property type="entry name" value="Rotavirus_NSP3"/>
</dbReference>
<dbReference type="Pfam" id="PF01665">
    <property type="entry name" value="Rota_NSP3"/>
    <property type="match status" value="1"/>
</dbReference>
<dbReference type="SUPFAM" id="SSF69903">
    <property type="entry name" value="NSP3 homodimer"/>
    <property type="match status" value="1"/>
</dbReference>
<dbReference type="SUPFAM" id="SSF58030">
    <property type="entry name" value="Rotavirus nonstructural proteins"/>
    <property type="match status" value="1"/>
</dbReference>
<feature type="chain" id="PRO_0000149540" description="Non-structural protein 3">
    <location>
        <begin position="1"/>
        <end position="313"/>
    </location>
</feature>
<feature type="region of interest" description="RNA-binding" evidence="1">
    <location>
        <begin position="1"/>
        <end position="149"/>
    </location>
</feature>
<feature type="region of interest" description="Dimerization" evidence="1">
    <location>
        <begin position="150"/>
        <end position="206"/>
    </location>
</feature>
<feature type="region of interest" description="Interaction with host ZC3H7B" evidence="1">
    <location>
        <begin position="170"/>
        <end position="234"/>
    </location>
</feature>
<feature type="region of interest" description="Interaction with host EIF4G1" evidence="1">
    <location>
        <begin position="208"/>
        <end position="313"/>
    </location>
</feature>
<feature type="coiled-coil region" evidence="1">
    <location>
        <begin position="166"/>
        <end position="237"/>
    </location>
</feature>
<organism>
    <name type="scientific">Rotavirus A (strain RVA/Cow/United Kingdom/UK/1975/G6P7[5])</name>
    <name type="common">RV-A</name>
    <dbReference type="NCBI Taxonomy" id="10934"/>
    <lineage>
        <taxon>Viruses</taxon>
        <taxon>Riboviria</taxon>
        <taxon>Orthornavirae</taxon>
        <taxon>Duplornaviricota</taxon>
        <taxon>Resentoviricetes</taxon>
        <taxon>Reovirales</taxon>
        <taxon>Sedoreoviridae</taxon>
        <taxon>Rotavirus</taxon>
        <taxon>Rotavirus A</taxon>
    </lineage>
</organism>
<organismHost>
    <name type="scientific">Bos taurus</name>
    <name type="common">Bovine</name>
    <dbReference type="NCBI Taxonomy" id="9913"/>
</organismHost>
<sequence>MLKMESTQQMASSIINTSFEAAVVAATSTLELMGIQYDYNEIYTRVKSKFDYVMDDSGVKNNLLGKAATIDQALNGKFGSVMRNKNWMTDSRTVAKLDEDVNKLRMMLSSKGIDQKMRVLNACFSVKRIPGKSSSVIKCTRLMKDKIERGAVEVDDSFVEEKMEVDTVDWKSRYDQLERRFESLKQRVNEKYTTWVQKAKKVNENMYSLQNVISQQQNQIADLQNYCSKLEADLQNKVGSLVSSVEWYLKSMELPDEVKTDIEQQLNSIDTISPINAIDDLEILIRNLIHDYDRTFLMFKGLLRQCNYEYAYE</sequence>
<name>NSP3_ROTBU</name>
<comment type="function">
    <text evidence="1">Plays an important role in stimulating the translation of viral mRNAs. These mRNAs are capped but not polyadenylated, instead terminating in a conserved sequence 'GACC' at the 3' that is recognized by NSP3, which competes with host PABPC1 for EIF4G1 binding. The interaction between NSP3 and host EIF4G1 stabilizes the EIF4E-EIF4G1 interaction, thereby facilitating the initiation of capped mRNA translation.</text>
</comment>
<comment type="subunit">
    <text evidence="1">Homodimer. Interacts (via the coiled-coil region) with host ZC3H7B (via LD motif). Interacts with host EIF4G1.</text>
</comment>
<comment type="subcellular location">
    <subcellularLocation>
        <location evidence="1">Host cytoplasm</location>
    </subcellularLocation>
</comment>
<comment type="similarity">
    <text evidence="1">Belongs to the rotavirus NSP3 family.</text>
</comment>
<comment type="sequence caution">
    <conflict type="erroneous initiation">
        <sequence resource="EMBL-CDS" id="AAA47317"/>
    </conflict>
</comment>
<keyword id="KW-0175">Coiled coil</keyword>
<keyword id="KW-1035">Host cytoplasm</keyword>
<keyword id="KW-0945">Host-virus interaction</keyword>
<keyword id="KW-0694">RNA-binding</keyword>
<keyword id="KW-0810">Translation regulation</keyword>
<evidence type="ECO:0000255" key="1">
    <source>
        <dbReference type="HAMAP-Rule" id="MF_04094"/>
    </source>
</evidence>
<accession>P04514</accession>
<protein>
    <recommendedName>
        <fullName evidence="1">Non-structural protein 3</fullName>
        <shortName evidence="1">NSP3</shortName>
    </recommendedName>
    <alternativeName>
        <fullName evidence="1">NCVP4</fullName>
    </alternativeName>
    <alternativeName>
        <fullName evidence="1">Non-structural RNA-binding protein 34</fullName>
        <shortName evidence="1">NS34</shortName>
    </alternativeName>
</protein>
<reference key="1">
    <citation type="journal article" date="1984" name="Virology">
        <title>Nucleotide sequence of gene segment 9 encoding a nonstructural protein of UK bovine rotavirus.</title>
        <authorList>
            <person name="Ward C.W."/>
            <person name="Elleman T.C."/>
            <person name="Azad A.A."/>
            <person name="Dyall-Smith M.L."/>
        </authorList>
    </citation>
    <scope>NUCLEOTIDE SEQUENCE [GENOMIC RNA]</scope>
</reference>